<evidence type="ECO:0000255" key="1"/>
<evidence type="ECO:0000255" key="2">
    <source>
        <dbReference type="PROSITE-ProRule" id="PRU00145"/>
    </source>
</evidence>
<evidence type="ECO:0000255" key="3">
    <source>
        <dbReference type="PROSITE-ProRule" id="PRU00288"/>
    </source>
</evidence>
<evidence type="ECO:0000256" key="4">
    <source>
        <dbReference type="SAM" id="MobiDB-lite"/>
    </source>
</evidence>
<evidence type="ECO:0000269" key="5">
    <source>
    </source>
</evidence>
<evidence type="ECO:0000269" key="6">
    <source>
    </source>
</evidence>
<evidence type="ECO:0000269" key="7">
    <source>
    </source>
</evidence>
<evidence type="ECO:0000269" key="8">
    <source>
    </source>
</evidence>
<evidence type="ECO:0000269" key="9">
    <source>
    </source>
</evidence>
<evidence type="ECO:0000269" key="10">
    <source>
    </source>
</evidence>
<evidence type="ECO:0000269" key="11">
    <source>
    </source>
</evidence>
<evidence type="ECO:0000303" key="12">
    <source>
    </source>
</evidence>
<evidence type="ECO:0000303" key="13">
    <source>
    </source>
</evidence>
<evidence type="ECO:0000305" key="14"/>
<evidence type="ECO:0000312" key="15">
    <source>
        <dbReference type="Araport" id="AT5G13300"/>
    </source>
</evidence>
<evidence type="ECO:0000312" key="16">
    <source>
        <dbReference type="EMBL" id="CAB86637.1"/>
    </source>
</evidence>
<evidence type="ECO:0007744" key="17">
    <source>
    </source>
</evidence>
<sequence length="827" mass="92524">MHFTKLDDSPMFRKQLQSMEESAEILRERSLKFYKGCRKYTEGLGEAYDGDIAFASALETFGGGHNDPISVAFGGPVMTKFTIALREIGTYKEVLRSQVEHILNDRLLQFANMDLHEVKEARKRFDKASLTYDQAREKFLSLRKGTKSDVAAALEQELHTSRSMFEQARFNLVTALSNVEAKKRFEFLEAVSGTMDAHLRYFKQGYELLHQMEPYINQVLTYAQQSRERSNYEQAALNEKMQEYKRQVDRESRWGSNGSNGSPNGDGIQAIGRSSHKMIDAVMQSAARGKVQTIRQGYLSKRSSNLRGDWKRRFFVLDSRGMLYYYRKQCSKPSGSGSQLSGQRNSSELGSGLLSRWLSSNNHGHGGVHDEKSVARHTVNLLTSTIKVDADQSDLRFCFRIISPTKNYTLQAESALDQMDWIEKITGVIASLLSSQVPEQRLPGSPMGSGHHRSASESSSYESSEYDHPTTEEFVCERSFLGYNERPSRSFQPQRSIRKGEKPIDALRKVCGNDKCADCGAPEPDWASLNLGVLVCIECSGVHRNLGVHISKVRSLTLDVKVWEPSVISLFQALGNTFANTVWEELLHSRSAIHFDPGLTVSDKSRVMVTGKPSYADMISIKEKYIQAKYAEKLFVRRSRDSDFPQSAAQQMWDAVSGNDKKAVYRLIVNGDADVNYVYDQTSSSSLTLSRVILVPERPKREDVLLRLRNELLDRTGSSSNISPEGSGGSSLLHCACEKADLGMVELLLQYGANVNASDSSGQTPLHCCLLRGKVTIARLLLTRGADPEAMNREGKTALDIAAESNFTDPEVLALLSDTNGYNHRQC</sequence>
<reference key="1">
    <citation type="journal article" date="2005" name="Development">
        <title>VAN3 ARF-GAP-mediated vesicle transport is involved in leaf vascular network formation.</title>
        <authorList>
            <person name="Koizumi K."/>
            <person name="Naramoto S."/>
            <person name="Sawa S."/>
            <person name="Yahara N."/>
            <person name="Ueda T."/>
            <person name="Nakano A."/>
            <person name="Sugiyama M."/>
            <person name="Fukuda H."/>
        </authorList>
    </citation>
    <scope>NUCLEOTIDE SEQUENCE [MRNA]</scope>
    <scope>INDUCTION BY AUXIN</scope>
    <scope>SUBUNIT</scope>
    <scope>SUBCELLULAR LOCATION</scope>
    <scope>FUNCTION</scope>
    <source>
        <strain>cv. Landsberg erecta</strain>
    </source>
</reference>
<reference key="2">
    <citation type="journal article" date="2000" name="Nature">
        <title>Sequence and analysis of chromosome 5 of the plant Arabidopsis thaliana.</title>
        <authorList>
            <person name="Tabata S."/>
            <person name="Kaneko T."/>
            <person name="Nakamura Y."/>
            <person name="Kotani H."/>
            <person name="Kato T."/>
            <person name="Asamizu E."/>
            <person name="Miyajima N."/>
            <person name="Sasamoto S."/>
            <person name="Kimura T."/>
            <person name="Hosouchi T."/>
            <person name="Kawashima K."/>
            <person name="Kohara M."/>
            <person name="Matsumoto M."/>
            <person name="Matsuno A."/>
            <person name="Muraki A."/>
            <person name="Nakayama S."/>
            <person name="Nakazaki N."/>
            <person name="Naruo K."/>
            <person name="Okumura S."/>
            <person name="Shinpo S."/>
            <person name="Takeuchi C."/>
            <person name="Wada T."/>
            <person name="Watanabe A."/>
            <person name="Yamada M."/>
            <person name="Yasuda M."/>
            <person name="Sato S."/>
            <person name="de la Bastide M."/>
            <person name="Huang E."/>
            <person name="Spiegel L."/>
            <person name="Gnoj L."/>
            <person name="O'Shaughnessy A."/>
            <person name="Preston R."/>
            <person name="Habermann K."/>
            <person name="Murray J."/>
            <person name="Johnson D."/>
            <person name="Rohlfing T."/>
            <person name="Nelson J."/>
            <person name="Stoneking T."/>
            <person name="Pepin K."/>
            <person name="Spieth J."/>
            <person name="Sekhon M."/>
            <person name="Armstrong J."/>
            <person name="Becker M."/>
            <person name="Belter E."/>
            <person name="Cordum H."/>
            <person name="Cordes M."/>
            <person name="Courtney L."/>
            <person name="Courtney W."/>
            <person name="Dante M."/>
            <person name="Du H."/>
            <person name="Edwards J."/>
            <person name="Fryman J."/>
            <person name="Haakensen B."/>
            <person name="Lamar E."/>
            <person name="Latreille P."/>
            <person name="Leonard S."/>
            <person name="Meyer R."/>
            <person name="Mulvaney E."/>
            <person name="Ozersky P."/>
            <person name="Riley A."/>
            <person name="Strowmatt C."/>
            <person name="Wagner-McPherson C."/>
            <person name="Wollam A."/>
            <person name="Yoakum M."/>
            <person name="Bell M."/>
            <person name="Dedhia N."/>
            <person name="Parnell L."/>
            <person name="Shah R."/>
            <person name="Rodriguez M."/>
            <person name="Hoon See L."/>
            <person name="Vil D."/>
            <person name="Baker J."/>
            <person name="Kirchoff K."/>
            <person name="Toth K."/>
            <person name="King L."/>
            <person name="Bahret A."/>
            <person name="Miller B."/>
            <person name="Marra M.A."/>
            <person name="Martienssen R."/>
            <person name="McCombie W.R."/>
            <person name="Wilson R.K."/>
            <person name="Murphy G."/>
            <person name="Bancroft I."/>
            <person name="Volckaert G."/>
            <person name="Wambutt R."/>
            <person name="Duesterhoeft A."/>
            <person name="Stiekema W."/>
            <person name="Pohl T."/>
            <person name="Entian K.-D."/>
            <person name="Terryn N."/>
            <person name="Hartley N."/>
            <person name="Bent E."/>
            <person name="Johnson S."/>
            <person name="Langham S.-A."/>
            <person name="McCullagh B."/>
            <person name="Robben J."/>
            <person name="Grymonprez B."/>
            <person name="Zimmermann W."/>
            <person name="Ramsperger U."/>
            <person name="Wedler H."/>
            <person name="Balke K."/>
            <person name="Wedler E."/>
            <person name="Peters S."/>
            <person name="van Staveren M."/>
            <person name="Dirkse W."/>
            <person name="Mooijman P."/>
            <person name="Klein Lankhorst R."/>
            <person name="Weitzenegger T."/>
            <person name="Bothe G."/>
            <person name="Rose M."/>
            <person name="Hauf J."/>
            <person name="Berneiser S."/>
            <person name="Hempel S."/>
            <person name="Feldpausch M."/>
            <person name="Lamberth S."/>
            <person name="Villarroel R."/>
            <person name="Gielen J."/>
            <person name="Ardiles W."/>
            <person name="Bents O."/>
            <person name="Lemcke K."/>
            <person name="Kolesov G."/>
            <person name="Mayer K.F.X."/>
            <person name="Rudd S."/>
            <person name="Schoof H."/>
            <person name="Schueller C."/>
            <person name="Zaccaria P."/>
            <person name="Mewes H.-W."/>
            <person name="Bevan M."/>
            <person name="Fransz P.F."/>
        </authorList>
    </citation>
    <scope>NUCLEOTIDE SEQUENCE [LARGE SCALE GENOMIC DNA]</scope>
    <source>
        <strain>cv. Columbia</strain>
    </source>
</reference>
<reference key="3">
    <citation type="journal article" date="2017" name="Plant J.">
        <title>Araport11: a complete reannotation of the Arabidopsis thaliana reference genome.</title>
        <authorList>
            <person name="Cheng C.Y."/>
            <person name="Krishnakumar V."/>
            <person name="Chan A.P."/>
            <person name="Thibaud-Nissen F."/>
            <person name="Schobel S."/>
            <person name="Town C.D."/>
        </authorList>
    </citation>
    <scope>GENOME REANNOTATION</scope>
    <source>
        <strain>cv. Columbia</strain>
    </source>
</reference>
<reference key="4">
    <citation type="submission" date="2006-07" db="EMBL/GenBank/DDBJ databases">
        <title>Large-scale analysis of RIKEN Arabidopsis full-length (RAFL) cDNAs.</title>
        <authorList>
            <person name="Totoki Y."/>
            <person name="Seki M."/>
            <person name="Ishida J."/>
            <person name="Nakajima M."/>
            <person name="Enju A."/>
            <person name="Kamiya A."/>
            <person name="Narusaka M."/>
            <person name="Shin-i T."/>
            <person name="Nakagawa M."/>
            <person name="Sakamoto N."/>
            <person name="Oishi K."/>
            <person name="Kohara Y."/>
            <person name="Kobayashi M."/>
            <person name="Toyoda A."/>
            <person name="Sakaki Y."/>
            <person name="Sakurai T."/>
            <person name="Iida K."/>
            <person name="Akiyama K."/>
            <person name="Satou M."/>
            <person name="Toyoda T."/>
            <person name="Konagaya A."/>
            <person name="Carninci P."/>
            <person name="Kawai J."/>
            <person name="Hayashizaki Y."/>
            <person name="Shinozaki K."/>
        </authorList>
    </citation>
    <scope>NUCLEOTIDE SEQUENCE [LARGE SCALE MRNA] OF 419-827</scope>
    <source>
        <strain>cv. Columbia</strain>
    </source>
</reference>
<reference key="5">
    <citation type="journal article" date="2000" name="Development">
        <title>A series of novel mutants of Arabidopsis thaliana that are defective in the formation of continuous vascular network: calling the auxin signal flow canalization hypothesis into question.</title>
        <authorList>
            <person name="Koizumi K."/>
            <person name="Sugiyama M."/>
            <person name="Fukuda H."/>
        </authorList>
    </citation>
    <scope>FUNCTION</scope>
</reference>
<reference key="6">
    <citation type="journal article" date="2000" name="Development">
        <title>The SCARFACE gene is required for cotyledon and leaf vein patterning.</title>
        <authorList>
            <person name="Deyholos M.K."/>
            <person name="Cordner G."/>
            <person name="Beebe D."/>
            <person name="Sieburth L.E."/>
        </authorList>
    </citation>
    <scope>FUNCTION</scope>
</reference>
<reference key="7">
    <citation type="journal article" date="2003" name="Plant Physiol.">
        <title>Analysis of the small GTPase gene superfamily of Arabidopsis.</title>
        <authorList>
            <person name="Vernoud V."/>
            <person name="Horton A.C."/>
            <person name="Yang Z."/>
            <person name="Nielsen E."/>
        </authorList>
    </citation>
    <scope>GENE FAMILY</scope>
    <scope>NOMENCLATURE</scope>
</reference>
<reference key="8">
    <citation type="journal article" date="2005" name="Plant Physiol.">
        <title>DRP1A is responsible for vascular continuity synergistically working with VAN3 in Arabidopsis.</title>
        <authorList>
            <person name="Sawa S."/>
            <person name="Koizumi K."/>
            <person name="Naramoto S."/>
            <person name="Demura T."/>
            <person name="Ueda T."/>
            <person name="Nakano A."/>
            <person name="Fukuda H."/>
        </authorList>
    </citation>
    <scope>INTERACTION WITH DRP1A</scope>
</reference>
<reference key="9">
    <citation type="journal article" date="2006" name="Plant Cell">
        <title>SCARFACE encodes an ARF-GAP that is required for normal auxin efflux and vein patterning in Arabidopsis.</title>
        <authorList>
            <person name="Sieburth L.E."/>
            <person name="Muday G.K."/>
            <person name="King E.J."/>
            <person name="Benton G."/>
            <person name="Kim S."/>
            <person name="Metcalf K.E."/>
            <person name="Meyers L."/>
            <person name="Seamen E."/>
            <person name="Van Norman J.M."/>
        </authorList>
    </citation>
    <scope>FUNCTION</scope>
    <scope>TISSUE SPECIFICITY</scope>
    <scope>MUTAGENESIS OF ASP-518 AND CYS-519</scope>
</reference>
<reference key="10">
    <citation type="journal article" date="2008" name="J. Proteome Res.">
        <title>Site-specific phosphorylation profiling of Arabidopsis proteins by mass spectrometry and peptide chip analysis.</title>
        <authorList>
            <person name="de la Fuente van Bentem S."/>
            <person name="Anrather D."/>
            <person name="Dohnal I."/>
            <person name="Roitinger E."/>
            <person name="Csaszar E."/>
            <person name="Joore J."/>
            <person name="Buijnink J."/>
            <person name="Carreri A."/>
            <person name="Forzani C."/>
            <person name="Lorkovic Z.J."/>
            <person name="Barta A."/>
            <person name="Lecourieux D."/>
            <person name="Verhounig A."/>
            <person name="Jonak C."/>
            <person name="Hirt H."/>
        </authorList>
    </citation>
    <scope>PHOSPHORYLATION [LARGE SCALE ANALYSIS] AT SER-445</scope>
    <scope>IDENTIFICATION BY MASS SPECTROMETRY [LARGE SCALE ANALYSIS]</scope>
    <source>
        <tissue>Root</tissue>
    </source>
</reference>
<reference key="11">
    <citation type="journal article" date="2009" name="Development">
        <title>Phosphoinositide-dependent regulation of VAN3 ARF-GAP localization and activity essential for vascular tissue continuity in plants.</title>
        <authorList>
            <person name="Naramoto S."/>
            <person name="Sawa S."/>
            <person name="Koizumi K."/>
            <person name="Uemura T."/>
            <person name="Ueda T."/>
            <person name="Friml J."/>
            <person name="Nakano A."/>
            <person name="Fukuda H."/>
        </authorList>
    </citation>
    <scope>MUTAGENESIS OF GLY-321</scope>
    <scope>SUBCELLULAR LOCATION</scope>
    <scope>INTERACTION WITH VAB</scope>
    <scope>ACTIVITY REGULATION</scope>
</reference>
<reference key="12">
    <citation type="journal article" date="2009" name="Plant J.">
        <title>CVP2- and CVL1-mediated phosphoinositide signaling as a regulator of the ARF GAP SFC/VAN3 in establishment of foliar vein patterns.</title>
        <authorList>
            <person name="Carland F."/>
            <person name="Nelson T."/>
        </authorList>
    </citation>
    <scope>MUTAGENESIS OF LEU-317 AND GLY-321</scope>
    <scope>TISSUE SPECIFICITY</scope>
    <scope>DEVELOPMENTAL STAGE</scope>
    <scope>PH DOMAIN</scope>
</reference>
<organism>
    <name type="scientific">Arabidopsis thaliana</name>
    <name type="common">Mouse-ear cress</name>
    <dbReference type="NCBI Taxonomy" id="3702"/>
    <lineage>
        <taxon>Eukaryota</taxon>
        <taxon>Viridiplantae</taxon>
        <taxon>Streptophyta</taxon>
        <taxon>Embryophyta</taxon>
        <taxon>Tracheophyta</taxon>
        <taxon>Spermatophyta</taxon>
        <taxon>Magnoliopsida</taxon>
        <taxon>eudicotyledons</taxon>
        <taxon>Gunneridae</taxon>
        <taxon>Pentapetalae</taxon>
        <taxon>rosids</taxon>
        <taxon>malvids</taxon>
        <taxon>Brassicales</taxon>
        <taxon>Brassicaceae</taxon>
        <taxon>Camelineae</taxon>
        <taxon>Arabidopsis</taxon>
    </lineage>
</organism>
<gene>
    <name type="primary">AGD3</name>
    <name evidence="12 13" type="synonym">FKD2</name>
    <name type="synonym">SFC</name>
    <name evidence="12" type="synonym">VAN3</name>
    <name evidence="15" type="ordered locus">At5g13300</name>
    <name evidence="16" type="ORF">T31B5.120</name>
</gene>
<comment type="function">
    <text evidence="5 6 7 9">GTPase-activating protein (GAP) for ADP ribosylation factor (ARF). Involved in the spatial control of provascular differentiation. Required for the formation of the normal pattern of continuous secondary veins. Involved in auxin signaling but not in polar auxin transport or in auxin responses. Required for PIN1 internalization in roots.</text>
</comment>
<comment type="activity regulation">
    <text evidence="10">ARF GAP activity strongly enhanced by phosphatidylinositol 4-monophosphate (PIP) and moderately enhanced by phosphatidylinositol 4,5-bisphosphate (PIP2).</text>
</comment>
<comment type="subunit">
    <text evidence="7 8 10">Homodimer (PubMed:15743878). Interacts with DRP1A (PubMed:15923323). Interacts with VAB (PubMed:19363154).</text>
</comment>
<comment type="interaction">
    <interactant intactId="EBI-994222">
        <id>Q5W7F2</id>
    </interactant>
    <interactant intactId="EBI-994234">
        <id>P42697</id>
        <label>DRP1A</label>
    </interactant>
    <organismsDiffer>false</organismsDiffer>
    <experiments>4</experiments>
</comment>
<comment type="interaction">
    <interactant intactId="EBI-994222">
        <id>Q5W7F2</id>
    </interactant>
    <interactant intactId="EBI-10769249">
        <id>Q8W4K5</id>
        <label>VAB</label>
    </interactant>
    <organismsDiffer>false</organismsDiffer>
    <experiments>5</experiments>
</comment>
<comment type="subcellular location">
    <subcellularLocation>
        <location evidence="7 10">Golgi apparatus</location>
        <location evidence="7 10">trans-Golgi network</location>
    </subcellularLocation>
    <text evidence="10">BAR and PH domains are essential for the proper localization. Localization seems to be regulated by CVP2 and CVL1 activity as the phosphatidylinositol 4-monophosphate (PIP)-binding by the PH domain is required for the TGN localization.</text>
</comment>
<comment type="tissue specificity">
    <text evidence="9 11">Broadly expressed. Detected in developing veins of the leaf and root (PubMed:19473324). Detected in roots, hypocotyls, cotyledons, leaves, siliques and shoot apical meristems (PubMed:16698946).</text>
</comment>
<comment type="developmental stage">
    <text evidence="11">Expression refined to procambial cells during embryogenesis.</text>
</comment>
<comment type="induction">
    <text evidence="7">Up-regulated by auxin.</text>
</comment>
<comment type="domain">
    <text evidence="7 11">The PH domain is responsive of the binding to phosphoinositol (PubMed:19473324). The BAR domain is required and sufficient for homodimerization (PubMed:15743878).</text>
</comment>
<comment type="miscellaneous">
    <text evidence="7">Binds to phosphatidylinositol (PI), phosphatidylinositol 4-monophosphate (PIP) and phosphatidylinositol 4,5-bisphosphate (PIP2) but not to phosphatidic acid (PA), phosphatidylcholine (PC) or phosphatidylethanolamine (PE).</text>
</comment>
<comment type="sequence caution" evidence="14">
    <conflict type="erroneous gene model prediction">
        <sequence resource="EMBL-CDS" id="CAB86637"/>
    </conflict>
</comment>
<feature type="chain" id="PRO_0000332940" description="ADP-ribosylation factor GTPase-activating protein AGD3">
    <location>
        <begin position="1"/>
        <end position="827"/>
    </location>
</feature>
<feature type="domain" description="BAR">
    <location>
        <begin position="1"/>
        <end position="225"/>
    </location>
</feature>
<feature type="domain" description="PH" evidence="2">
    <location>
        <begin position="292"/>
        <end position="430"/>
    </location>
</feature>
<feature type="domain" description="Arf-GAP" evidence="3">
    <location>
        <begin position="501"/>
        <end position="643"/>
    </location>
</feature>
<feature type="repeat" description="ANK 1">
    <location>
        <begin position="728"/>
        <end position="757"/>
    </location>
</feature>
<feature type="repeat" description="ANK 2">
    <location>
        <begin position="761"/>
        <end position="790"/>
    </location>
</feature>
<feature type="repeat" description="ANK 3">
    <location>
        <begin position="794"/>
        <end position="825"/>
    </location>
</feature>
<feature type="zinc finger region" description="C4-type" evidence="3">
    <location>
        <begin position="516"/>
        <end position="539"/>
    </location>
</feature>
<feature type="region of interest" description="Disordered" evidence="4">
    <location>
        <begin position="246"/>
        <end position="269"/>
    </location>
</feature>
<feature type="region of interest" description="Disordered" evidence="4">
    <location>
        <begin position="439"/>
        <end position="467"/>
    </location>
</feature>
<feature type="coiled-coil region" evidence="1">
    <location>
        <begin position="116"/>
        <end position="139"/>
    </location>
</feature>
<feature type="coiled-coil region" evidence="1">
    <location>
        <begin position="223"/>
        <end position="253"/>
    </location>
</feature>
<feature type="compositionally biased region" description="Low complexity" evidence="4">
    <location>
        <begin position="255"/>
        <end position="267"/>
    </location>
</feature>
<feature type="modified residue" description="Phosphoserine" evidence="17">
    <location>
        <position position="445"/>
    </location>
</feature>
<feature type="mutagenesis site" description="In fkd2-2; vein pattern defects." evidence="11">
    <original>L</original>
    <variation>F</variation>
    <location>
        <position position="317"/>
    </location>
</feature>
<feature type="mutagenesis site" description="In van3-2 and fkd2-1; reduced ARF GAP activity, mis-localization and vein pattern defects." evidence="10 11">
    <original>G</original>
    <variation>E</variation>
    <location>
        <position position="321"/>
    </location>
</feature>
<feature type="mutagenesis site" description="In scf-6; intermediate vein pattern defects." evidence="9">
    <original>D</original>
    <variation>N</variation>
    <location>
        <position position="518"/>
    </location>
</feature>
<feature type="mutagenesis site" description="In scf-1; strong vein pattern defects." evidence="9">
    <original>C</original>
    <variation>Y</variation>
    <location>
        <position position="519"/>
    </location>
</feature>
<name>AGD3_ARATH</name>
<accession>Q5W7F2</accession>
<accession>Q0WNK6</accession>
<accession>Q9LYU6</accession>
<protein>
    <recommendedName>
        <fullName>ADP-ribosylation factor GTPase-activating protein AGD3</fullName>
        <shortName>ARF GAP AGD3</shortName>
    </recommendedName>
    <alternativeName>
        <fullName>Protein ARF-GAP DOMAIN 3</fullName>
        <shortName>AtAGD3</shortName>
    </alternativeName>
    <alternativeName>
        <fullName evidence="12 13">Protein FORKED 2</fullName>
    </alternativeName>
    <alternativeName>
        <fullName>Protein SCARFACE</fullName>
    </alternativeName>
    <alternativeName>
        <fullName evidence="12">Protein VASCULAR NETWORK 3</fullName>
    </alternativeName>
</protein>
<dbReference type="EMBL" id="AL163491">
    <property type="protein sequence ID" value="CAB86637.1"/>
    <property type="status" value="ALT_SEQ"/>
    <property type="molecule type" value="Genomic_DNA"/>
</dbReference>
<dbReference type="EMBL" id="CP002688">
    <property type="protein sequence ID" value="AED91878.1"/>
    <property type="molecule type" value="Genomic_DNA"/>
</dbReference>
<dbReference type="EMBL" id="AB194395">
    <property type="protein sequence ID" value="BAD69588.1"/>
    <property type="molecule type" value="mRNA"/>
</dbReference>
<dbReference type="EMBL" id="AK229433">
    <property type="protein sequence ID" value="BAF01293.1"/>
    <property type="molecule type" value="mRNA"/>
</dbReference>
<dbReference type="PIR" id="T48577">
    <property type="entry name" value="T48577"/>
</dbReference>
<dbReference type="RefSeq" id="NP_196834.3">
    <property type="nucleotide sequence ID" value="NM_121333.4"/>
</dbReference>
<dbReference type="SMR" id="Q5W7F2"/>
<dbReference type="BioGRID" id="16449">
    <property type="interactions" value="5"/>
</dbReference>
<dbReference type="FunCoup" id="Q5W7F2">
    <property type="interactions" value="3274"/>
</dbReference>
<dbReference type="IntAct" id="Q5W7F2">
    <property type="interactions" value="3"/>
</dbReference>
<dbReference type="STRING" id="3702.Q5W7F2"/>
<dbReference type="iPTMnet" id="Q5W7F2"/>
<dbReference type="PaxDb" id="3702-AT5G13300.1"/>
<dbReference type="ProteomicsDB" id="243286"/>
<dbReference type="EnsemblPlants" id="AT5G13300.1">
    <property type="protein sequence ID" value="AT5G13300.1"/>
    <property type="gene ID" value="AT5G13300"/>
</dbReference>
<dbReference type="GeneID" id="831171"/>
<dbReference type="Gramene" id="AT5G13300.1">
    <property type="protein sequence ID" value="AT5G13300.1"/>
    <property type="gene ID" value="AT5G13300"/>
</dbReference>
<dbReference type="KEGG" id="ath:AT5G13300"/>
<dbReference type="Araport" id="AT5G13300"/>
<dbReference type="TAIR" id="AT5G13300">
    <property type="gene designation" value="SFC"/>
</dbReference>
<dbReference type="eggNOG" id="KOG0521">
    <property type="taxonomic scope" value="Eukaryota"/>
</dbReference>
<dbReference type="HOGENOM" id="CLU_016029_1_0_1"/>
<dbReference type="InParanoid" id="Q5W7F2"/>
<dbReference type="OMA" id="GSVMSCE"/>
<dbReference type="PhylomeDB" id="Q5W7F2"/>
<dbReference type="PRO" id="PR:Q5W7F2"/>
<dbReference type="Proteomes" id="UP000006548">
    <property type="component" value="Chromosome 5"/>
</dbReference>
<dbReference type="ExpressionAtlas" id="Q5W7F2">
    <property type="expression patterns" value="baseline and differential"/>
</dbReference>
<dbReference type="GO" id="GO:0005794">
    <property type="term" value="C:Golgi apparatus"/>
    <property type="evidence" value="ECO:0007669"/>
    <property type="project" value="UniProtKB-SubCell"/>
</dbReference>
<dbReference type="GO" id="GO:0005886">
    <property type="term" value="C:plasma membrane"/>
    <property type="evidence" value="ECO:0000314"/>
    <property type="project" value="TAIR"/>
</dbReference>
<dbReference type="GO" id="GO:0030140">
    <property type="term" value="C:trans-Golgi network transport vesicle"/>
    <property type="evidence" value="ECO:0000314"/>
    <property type="project" value="UniProtKB"/>
</dbReference>
<dbReference type="GO" id="GO:0005096">
    <property type="term" value="F:GTPase activator activity"/>
    <property type="evidence" value="ECO:0000314"/>
    <property type="project" value="TAIR"/>
</dbReference>
<dbReference type="GO" id="GO:0035091">
    <property type="term" value="F:phosphatidylinositol binding"/>
    <property type="evidence" value="ECO:0000314"/>
    <property type="project" value="TAIR"/>
</dbReference>
<dbReference type="GO" id="GO:0008270">
    <property type="term" value="F:zinc ion binding"/>
    <property type="evidence" value="ECO:0007669"/>
    <property type="project" value="UniProtKB-KW"/>
</dbReference>
<dbReference type="GO" id="GO:0006897">
    <property type="term" value="P:endocytosis"/>
    <property type="evidence" value="ECO:0000315"/>
    <property type="project" value="TAIR"/>
</dbReference>
<dbReference type="GO" id="GO:0009965">
    <property type="term" value="P:leaf morphogenesis"/>
    <property type="evidence" value="ECO:0000315"/>
    <property type="project" value="TAIR"/>
</dbReference>
<dbReference type="GO" id="GO:0010087">
    <property type="term" value="P:phloem or xylem histogenesis"/>
    <property type="evidence" value="ECO:0000315"/>
    <property type="project" value="TAIR"/>
</dbReference>
<dbReference type="GO" id="GO:0009733">
    <property type="term" value="P:response to auxin"/>
    <property type="evidence" value="ECO:0000315"/>
    <property type="project" value="TAIR"/>
</dbReference>
<dbReference type="GO" id="GO:0010051">
    <property type="term" value="P:xylem and phloem pattern formation"/>
    <property type="evidence" value="ECO:0000315"/>
    <property type="project" value="TAIR"/>
</dbReference>
<dbReference type="CDD" id="cd08204">
    <property type="entry name" value="ArfGap"/>
    <property type="match status" value="1"/>
</dbReference>
<dbReference type="CDD" id="cd07606">
    <property type="entry name" value="BAR_SFC_plant"/>
    <property type="match status" value="1"/>
</dbReference>
<dbReference type="CDD" id="cd13250">
    <property type="entry name" value="PH_ACAP"/>
    <property type="match status" value="1"/>
</dbReference>
<dbReference type="FunFam" id="1.10.220.150:FF:000019">
    <property type="entry name" value="ADP-ribosylation factor GTPase-activating protein AGD1"/>
    <property type="match status" value="1"/>
</dbReference>
<dbReference type="FunFam" id="1.25.40.20:FF:000513">
    <property type="entry name" value="ADP-ribosylation factor GTPase-activating protein AGD1"/>
    <property type="match status" value="1"/>
</dbReference>
<dbReference type="FunFam" id="1.20.1270.60:FF:000080">
    <property type="entry name" value="ADP-ribosylation factor GTPase-activating protein AGD3"/>
    <property type="match status" value="1"/>
</dbReference>
<dbReference type="Gene3D" id="1.25.40.20">
    <property type="entry name" value="Ankyrin repeat-containing domain"/>
    <property type="match status" value="1"/>
</dbReference>
<dbReference type="Gene3D" id="1.10.220.150">
    <property type="entry name" value="Arf GTPase activating protein"/>
    <property type="match status" value="1"/>
</dbReference>
<dbReference type="Gene3D" id="1.20.1270.60">
    <property type="entry name" value="Arfaptin homology (AH) domain/BAR domain"/>
    <property type="match status" value="1"/>
</dbReference>
<dbReference type="Gene3D" id="2.30.29.30">
    <property type="entry name" value="Pleckstrin-homology domain (PH domain)/Phosphotyrosine-binding domain (PTB)"/>
    <property type="match status" value="1"/>
</dbReference>
<dbReference type="InterPro" id="IPR045258">
    <property type="entry name" value="ACAP1/2/3-like"/>
</dbReference>
<dbReference type="InterPro" id="IPR035670">
    <property type="entry name" value="AGD1/2/3/4_BAR_plant"/>
</dbReference>
<dbReference type="InterPro" id="IPR027267">
    <property type="entry name" value="AH/BAR_dom_sf"/>
</dbReference>
<dbReference type="InterPro" id="IPR002110">
    <property type="entry name" value="Ankyrin_rpt"/>
</dbReference>
<dbReference type="InterPro" id="IPR036770">
    <property type="entry name" value="Ankyrin_rpt-contain_sf"/>
</dbReference>
<dbReference type="InterPro" id="IPR037278">
    <property type="entry name" value="ARFGAP/RecO"/>
</dbReference>
<dbReference type="InterPro" id="IPR001164">
    <property type="entry name" value="ArfGAP_dom"/>
</dbReference>
<dbReference type="InterPro" id="IPR038508">
    <property type="entry name" value="ArfGAP_dom_sf"/>
</dbReference>
<dbReference type="InterPro" id="IPR004148">
    <property type="entry name" value="BAR_dom"/>
</dbReference>
<dbReference type="InterPro" id="IPR011993">
    <property type="entry name" value="PH-like_dom_sf"/>
</dbReference>
<dbReference type="InterPro" id="IPR001849">
    <property type="entry name" value="PH_domain"/>
</dbReference>
<dbReference type="PANTHER" id="PTHR23180:SF160">
    <property type="entry name" value="ADP-RIBOSYLATION FACTOR GTPASE-ACTIVATING PROTEIN EFFECTOR PROTEIN 1"/>
    <property type="match status" value="1"/>
</dbReference>
<dbReference type="PANTHER" id="PTHR23180">
    <property type="entry name" value="CENTAURIN/ARF"/>
    <property type="match status" value="1"/>
</dbReference>
<dbReference type="Pfam" id="PF12796">
    <property type="entry name" value="Ank_2"/>
    <property type="match status" value="1"/>
</dbReference>
<dbReference type="Pfam" id="PF01412">
    <property type="entry name" value="ArfGap"/>
    <property type="match status" value="1"/>
</dbReference>
<dbReference type="Pfam" id="PF16746">
    <property type="entry name" value="BAR_3"/>
    <property type="match status" value="1"/>
</dbReference>
<dbReference type="Pfam" id="PF00169">
    <property type="entry name" value="PH"/>
    <property type="match status" value="1"/>
</dbReference>
<dbReference type="PRINTS" id="PR00405">
    <property type="entry name" value="REVINTRACTNG"/>
</dbReference>
<dbReference type="SMART" id="SM00248">
    <property type="entry name" value="ANK"/>
    <property type="match status" value="3"/>
</dbReference>
<dbReference type="SMART" id="SM00105">
    <property type="entry name" value="ArfGap"/>
    <property type="match status" value="1"/>
</dbReference>
<dbReference type="SMART" id="SM00721">
    <property type="entry name" value="BAR"/>
    <property type="match status" value="1"/>
</dbReference>
<dbReference type="SMART" id="SM00233">
    <property type="entry name" value="PH"/>
    <property type="match status" value="1"/>
</dbReference>
<dbReference type="SUPFAM" id="SSF48403">
    <property type="entry name" value="Ankyrin repeat"/>
    <property type="match status" value="1"/>
</dbReference>
<dbReference type="SUPFAM" id="SSF57863">
    <property type="entry name" value="ArfGap/RecO-like zinc finger"/>
    <property type="match status" value="1"/>
</dbReference>
<dbReference type="SUPFAM" id="SSF103657">
    <property type="entry name" value="BAR/IMD domain-like"/>
    <property type="match status" value="1"/>
</dbReference>
<dbReference type="SUPFAM" id="SSF50729">
    <property type="entry name" value="PH domain-like"/>
    <property type="match status" value="1"/>
</dbReference>
<dbReference type="PROSITE" id="PS50297">
    <property type="entry name" value="ANK_REP_REGION"/>
    <property type="match status" value="1"/>
</dbReference>
<dbReference type="PROSITE" id="PS50088">
    <property type="entry name" value="ANK_REPEAT"/>
    <property type="match status" value="2"/>
</dbReference>
<dbReference type="PROSITE" id="PS50115">
    <property type="entry name" value="ARFGAP"/>
    <property type="match status" value="1"/>
</dbReference>
<dbReference type="PROSITE" id="PS50003">
    <property type="entry name" value="PH_DOMAIN"/>
    <property type="match status" value="1"/>
</dbReference>
<proteinExistence type="evidence at protein level"/>
<keyword id="KW-0040">ANK repeat</keyword>
<keyword id="KW-0175">Coiled coil</keyword>
<keyword id="KW-0217">Developmental protein</keyword>
<keyword id="KW-0333">Golgi apparatus</keyword>
<keyword id="KW-0343">GTPase activation</keyword>
<keyword id="KW-0479">Metal-binding</keyword>
<keyword id="KW-0597">Phosphoprotein</keyword>
<keyword id="KW-1185">Reference proteome</keyword>
<keyword id="KW-0677">Repeat</keyword>
<keyword id="KW-0862">Zinc</keyword>
<keyword id="KW-0863">Zinc-finger</keyword>